<proteinExistence type="evidence at protein level"/>
<evidence type="ECO:0000255" key="1"/>
<evidence type="ECO:0000305" key="2"/>
<feature type="chain" id="PRO_0000077590" description="Transcriptional activator protein C1">
    <location>
        <begin position="1"/>
        <end position="92"/>
    </location>
</feature>
<feature type="DNA-binding region" description="H-T-H motif" evidence="1">
    <location>
        <begin position="26"/>
        <end position="45"/>
    </location>
</feature>
<feature type="sequence conflict" description="In Ref. 5; AA sequence." evidence="2" ref="5">
    <original>P</original>
    <variation>D</variation>
    <location>
        <position position="83"/>
    </location>
</feature>
<protein>
    <recommendedName>
        <fullName>Transcriptional activator protein C1</fullName>
    </recommendedName>
</protein>
<sequence>MELTSTRKKANAITSSILNRIAIRGQRKVADALGINESQISRWKGDFIPKMGMLLAVLEWGVEDEELAELAKKVAHLLTKEKPQDCGNSFEA</sequence>
<name>RPC1_BPP22</name>
<organismHost>
    <name type="scientific">Salmonella typhimurium</name>
    <dbReference type="NCBI Taxonomy" id="90371"/>
</organismHost>
<keyword id="KW-0010">Activator</keyword>
<keyword id="KW-0903">Direct protein sequencing</keyword>
<keyword id="KW-0238">DNA-binding</keyword>
<keyword id="KW-1185">Reference proteome</keyword>
<keyword id="KW-0804">Transcription</keyword>
<keyword id="KW-0805">Transcription regulation</keyword>
<organism>
    <name type="scientific">Salmonella phage P22</name>
    <name type="common">Bacteriophage P22</name>
    <dbReference type="NCBI Taxonomy" id="10754"/>
    <lineage>
        <taxon>Viruses</taxon>
        <taxon>Duplodnaviria</taxon>
        <taxon>Heunggongvirae</taxon>
        <taxon>Uroviricota</taxon>
        <taxon>Caudoviricetes</taxon>
        <taxon>Lederbergvirus</taxon>
    </lineage>
</organism>
<accession>P03041</accession>
<accession>Q7PCF0</accession>
<dbReference type="EMBL" id="M10074">
    <property type="protein sequence ID" value="AAA32274.1"/>
    <property type="molecule type" value="Genomic_DNA"/>
</dbReference>
<dbReference type="EMBL" id="M12584">
    <property type="protein sequence ID" value="AAA32269.1"/>
    <property type="molecule type" value="Genomic_DNA"/>
</dbReference>
<dbReference type="EMBL" id="AF217253">
    <property type="protein sequence ID" value="AAF75026.1"/>
    <property type="molecule type" value="Genomic_DNA"/>
</dbReference>
<dbReference type="EMBL" id="BK000583">
    <property type="protein sequence ID" value="DAA01023.1"/>
    <property type="molecule type" value="Genomic_DNA"/>
</dbReference>
<dbReference type="PIR" id="A91518">
    <property type="entry name" value="Z1BPC2"/>
</dbReference>
<dbReference type="RefSeq" id="NP_059608.1">
    <property type="nucleotide sequence ID" value="NC_002371.2"/>
</dbReference>
<dbReference type="SMR" id="P03041"/>
<dbReference type="GeneID" id="1262826"/>
<dbReference type="KEGG" id="vg:1262826"/>
<dbReference type="OrthoDB" id="18084at10239"/>
<dbReference type="Proteomes" id="UP000001795">
    <property type="component" value="Segment"/>
</dbReference>
<dbReference type="Proteomes" id="UP000007960">
    <property type="component" value="Segment"/>
</dbReference>
<dbReference type="GO" id="GO:0003677">
    <property type="term" value="F:DNA binding"/>
    <property type="evidence" value="ECO:0007669"/>
    <property type="project" value="UniProtKB-KW"/>
</dbReference>
<dbReference type="GO" id="GO:0006355">
    <property type="term" value="P:regulation of DNA-templated transcription"/>
    <property type="evidence" value="ECO:0007669"/>
    <property type="project" value="InterPro"/>
</dbReference>
<dbReference type="CDD" id="cd00093">
    <property type="entry name" value="HTH_XRE"/>
    <property type="match status" value="1"/>
</dbReference>
<dbReference type="Gene3D" id="1.10.260.40">
    <property type="entry name" value="lambda repressor-like DNA-binding domains"/>
    <property type="match status" value="1"/>
</dbReference>
<dbReference type="InterPro" id="IPR001387">
    <property type="entry name" value="Cro/C1-type_HTH"/>
</dbReference>
<dbReference type="InterPro" id="IPR010982">
    <property type="entry name" value="Lambda_DNA-bd_dom_sf"/>
</dbReference>
<dbReference type="InterPro" id="IPR007933">
    <property type="entry name" value="Transcrpt_activ_CII"/>
</dbReference>
<dbReference type="Pfam" id="PF05269">
    <property type="entry name" value="Phage_CII"/>
    <property type="match status" value="1"/>
</dbReference>
<dbReference type="SUPFAM" id="SSF47413">
    <property type="entry name" value="lambda repressor-like DNA-binding domains"/>
    <property type="match status" value="1"/>
</dbReference>
<gene>
    <name type="primary">C1</name>
</gene>
<comment type="function">
    <text>Binds to two promoters, P(RE) and Pa23 and activate transcription from these promoters.</text>
</comment>
<comment type="subunit">
    <text>Homotetramer.</text>
</comment>
<comment type="similarity">
    <text evidence="2">Belongs to the lambda phage CII protein family.</text>
</comment>
<reference key="1">
    <citation type="journal article" date="1984" name="Gene">
        <title>Sequence analysis of a region from the early right operon in phage P22 including the replication genes 18 and 12.</title>
        <authorList>
            <person name="Backhaus H."/>
            <person name="Petri J.B."/>
        </authorList>
    </citation>
    <scope>NUCLEOTIDE SEQUENCE [GENOMIC DNA]</scope>
</reference>
<reference key="2">
    <citation type="journal article" date="1986" name="Biochemistry">
        <title>Bacteriophage P22 Cro protein: sequence, purification, and properties.</title>
        <authorList>
            <person name="Poteete A.R."/>
            <person name="Hehir K."/>
            <person name="Sauer R.T."/>
        </authorList>
    </citation>
    <scope>NUCLEOTIDE SEQUENCE [GENOMIC DNA]</scope>
</reference>
<reference key="3">
    <citation type="journal article" date="2000" name="J. Bacteriol.">
        <title>Sequence of the genome of Salmonella bacteriophage P22.</title>
        <authorList>
            <person name="Vander Byl C.S."/>
            <person name="Kropinski A.M.B."/>
        </authorList>
    </citation>
    <scope>NUCLEOTIDE SEQUENCE [LARGE SCALE GENOMIC DNA]</scope>
</reference>
<reference key="4">
    <citation type="journal article" date="2003" name="J. Bacteriol.">
        <title>Corrected sequence of the bacteriophage P22 genome.</title>
        <authorList>
            <person name="Pedulla M.L."/>
            <person name="Ford M.E."/>
            <person name="Karthikeyan T."/>
            <person name="Houtz J.M."/>
            <person name="Hendrix R.W."/>
            <person name="Hatfull G.F."/>
            <person name="Poteete A.R."/>
            <person name="Gilcrease E.B."/>
            <person name="Winn-Stapley D.A."/>
            <person name="Casjens S.R."/>
        </authorList>
    </citation>
    <scope>NUCLEOTIDE SEQUENCE [LARGE SCALE GENOMIC DNA]</scope>
</reference>
<reference key="5">
    <citation type="journal article" date="1992" name="J. Biol. Chem.">
        <title>Characterization of the transcription activator protein C1 of bacteriophage P22.</title>
        <authorList>
            <person name="Ho Y.S."/>
            <person name="Pfarr D."/>
            <person name="Strickler J."/>
            <person name="Rosenberg M."/>
        </authorList>
    </citation>
    <scope>PROTEIN SEQUENCE OF 1-84</scope>
    <scope>CHARACTERIZATION</scope>
</reference>